<accession>A6TSJ4</accession>
<comment type="function">
    <text evidence="1">Catalyzes the attachment of glycine to tRNA(Gly).</text>
</comment>
<comment type="catalytic activity">
    <reaction evidence="1">
        <text>tRNA(Gly) + glycine + ATP = glycyl-tRNA(Gly) + AMP + diphosphate</text>
        <dbReference type="Rhea" id="RHEA:16013"/>
        <dbReference type="Rhea" id="RHEA-COMP:9664"/>
        <dbReference type="Rhea" id="RHEA-COMP:9683"/>
        <dbReference type="ChEBI" id="CHEBI:30616"/>
        <dbReference type="ChEBI" id="CHEBI:33019"/>
        <dbReference type="ChEBI" id="CHEBI:57305"/>
        <dbReference type="ChEBI" id="CHEBI:78442"/>
        <dbReference type="ChEBI" id="CHEBI:78522"/>
        <dbReference type="ChEBI" id="CHEBI:456215"/>
        <dbReference type="EC" id="6.1.1.14"/>
    </reaction>
</comment>
<comment type="subunit">
    <text evidence="1">Homodimer.</text>
</comment>
<comment type="subcellular location">
    <subcellularLocation>
        <location evidence="1">Cytoplasm</location>
    </subcellularLocation>
</comment>
<comment type="similarity">
    <text evidence="1">Belongs to the class-II aminoacyl-tRNA synthetase family.</text>
</comment>
<name>SYG_ALKMQ</name>
<reference key="1">
    <citation type="journal article" date="2016" name="Genome Announc.">
        <title>Complete genome sequence of Alkaliphilus metalliredigens strain QYMF, an alkaliphilic and metal-reducing bacterium isolated from borax-contaminated leachate ponds.</title>
        <authorList>
            <person name="Hwang C."/>
            <person name="Copeland A."/>
            <person name="Lucas S."/>
            <person name="Lapidus A."/>
            <person name="Barry K."/>
            <person name="Detter J.C."/>
            <person name="Glavina Del Rio T."/>
            <person name="Hammon N."/>
            <person name="Israni S."/>
            <person name="Dalin E."/>
            <person name="Tice H."/>
            <person name="Pitluck S."/>
            <person name="Chertkov O."/>
            <person name="Brettin T."/>
            <person name="Bruce D."/>
            <person name="Han C."/>
            <person name="Schmutz J."/>
            <person name="Larimer F."/>
            <person name="Land M.L."/>
            <person name="Hauser L."/>
            <person name="Kyrpides N."/>
            <person name="Mikhailova N."/>
            <person name="Ye Q."/>
            <person name="Zhou J."/>
            <person name="Richardson P."/>
            <person name="Fields M.W."/>
        </authorList>
    </citation>
    <scope>NUCLEOTIDE SEQUENCE [LARGE SCALE GENOMIC DNA]</scope>
    <source>
        <strain>QYMF</strain>
    </source>
</reference>
<evidence type="ECO:0000255" key="1">
    <source>
        <dbReference type="HAMAP-Rule" id="MF_00253"/>
    </source>
</evidence>
<gene>
    <name evidence="1" type="primary">glyQS</name>
    <name type="ordered locus">Amet_3022</name>
</gene>
<organism>
    <name type="scientific">Alkaliphilus metalliredigens (strain QYMF)</name>
    <dbReference type="NCBI Taxonomy" id="293826"/>
    <lineage>
        <taxon>Bacteria</taxon>
        <taxon>Bacillati</taxon>
        <taxon>Bacillota</taxon>
        <taxon>Clostridia</taxon>
        <taxon>Peptostreptococcales</taxon>
        <taxon>Natronincolaceae</taxon>
        <taxon>Alkaliphilus</taxon>
    </lineage>
</organism>
<sequence length="462" mass="53478">MTTAKSMEKIVALAKSRGFIFPGSEIYGGLANTWDYGPLGVELKNNVKKAWWKKFIQQSPYNVGLDSAILMNPTTWEASGHIGGFSDPLMDCKKCRARFRADKLIEDHFAKDGEDTIVDGWSNEQMASFIDEKAIVCPECDAKEFTDIRQFNLMFKTHQGVNEDTSTEIFLRPETAQGIFVNFKNVQRTARKKIPFGIGQIGKSFRNEITPGNYTFRTREFEQMELEFFCKPGDDLEWFDYWSNFCKKWLLDLSMKETSIRLRAHTEEELSHYSNATTDIEFKFPFGWGELWGIADRTDFDLKQHTEHSGVQLIYQDPVTNEKYVPYCIEPSLGADRVTLAFLVDAYEEEQIDEKDSRIVLKLHPALAPFKAAVLPLTKKLKEQSLELFEKLSDKFMIDYDDAGSIGKRYRRHDEIGTPYCITYDFDTLEDNCVTVRDRDTMEQQRVAIDELEVFLEEKIKF</sequence>
<dbReference type="EC" id="6.1.1.14" evidence="1"/>
<dbReference type="EMBL" id="CP000724">
    <property type="protein sequence ID" value="ABR49162.1"/>
    <property type="molecule type" value="Genomic_DNA"/>
</dbReference>
<dbReference type="RefSeq" id="WP_012064129.1">
    <property type="nucleotide sequence ID" value="NC_009633.1"/>
</dbReference>
<dbReference type="SMR" id="A6TSJ4"/>
<dbReference type="STRING" id="293826.Amet_3022"/>
<dbReference type="KEGG" id="amt:Amet_3022"/>
<dbReference type="eggNOG" id="COG0423">
    <property type="taxonomic scope" value="Bacteria"/>
</dbReference>
<dbReference type="HOGENOM" id="CLU_015515_2_1_9"/>
<dbReference type="OrthoDB" id="9760853at2"/>
<dbReference type="Proteomes" id="UP000001572">
    <property type="component" value="Chromosome"/>
</dbReference>
<dbReference type="GO" id="GO:0005737">
    <property type="term" value="C:cytoplasm"/>
    <property type="evidence" value="ECO:0007669"/>
    <property type="project" value="UniProtKB-SubCell"/>
</dbReference>
<dbReference type="GO" id="GO:0005524">
    <property type="term" value="F:ATP binding"/>
    <property type="evidence" value="ECO:0007669"/>
    <property type="project" value="UniProtKB-UniRule"/>
</dbReference>
<dbReference type="GO" id="GO:0140096">
    <property type="term" value="F:catalytic activity, acting on a protein"/>
    <property type="evidence" value="ECO:0007669"/>
    <property type="project" value="UniProtKB-ARBA"/>
</dbReference>
<dbReference type="GO" id="GO:0004820">
    <property type="term" value="F:glycine-tRNA ligase activity"/>
    <property type="evidence" value="ECO:0000250"/>
    <property type="project" value="UniProtKB"/>
</dbReference>
<dbReference type="GO" id="GO:0046983">
    <property type="term" value="F:protein dimerization activity"/>
    <property type="evidence" value="ECO:0000250"/>
    <property type="project" value="UniProtKB"/>
</dbReference>
<dbReference type="GO" id="GO:0016740">
    <property type="term" value="F:transferase activity"/>
    <property type="evidence" value="ECO:0007669"/>
    <property type="project" value="UniProtKB-ARBA"/>
</dbReference>
<dbReference type="GO" id="GO:0006426">
    <property type="term" value="P:glycyl-tRNA aminoacylation"/>
    <property type="evidence" value="ECO:0007669"/>
    <property type="project" value="UniProtKB-UniRule"/>
</dbReference>
<dbReference type="CDD" id="cd00774">
    <property type="entry name" value="GlyRS-like_core"/>
    <property type="match status" value="1"/>
</dbReference>
<dbReference type="CDD" id="cd00858">
    <property type="entry name" value="GlyRS_anticodon"/>
    <property type="match status" value="1"/>
</dbReference>
<dbReference type="FunFam" id="3.40.50.800:FF:000002">
    <property type="entry name" value="Glycine--tRNA ligase"/>
    <property type="match status" value="1"/>
</dbReference>
<dbReference type="Gene3D" id="3.40.50.800">
    <property type="entry name" value="Anticodon-binding domain"/>
    <property type="match status" value="1"/>
</dbReference>
<dbReference type="Gene3D" id="3.30.930.10">
    <property type="entry name" value="Bira Bifunctional Protein, Domain 2"/>
    <property type="match status" value="1"/>
</dbReference>
<dbReference type="HAMAP" id="MF_00253_B">
    <property type="entry name" value="Gly_tRNA_synth_B"/>
    <property type="match status" value="1"/>
</dbReference>
<dbReference type="InterPro" id="IPR002314">
    <property type="entry name" value="aa-tRNA-synt_IIb"/>
</dbReference>
<dbReference type="InterPro" id="IPR006195">
    <property type="entry name" value="aa-tRNA-synth_II"/>
</dbReference>
<dbReference type="InterPro" id="IPR045864">
    <property type="entry name" value="aa-tRNA-synth_II/BPL/LPL"/>
</dbReference>
<dbReference type="InterPro" id="IPR004154">
    <property type="entry name" value="Anticodon-bd"/>
</dbReference>
<dbReference type="InterPro" id="IPR036621">
    <property type="entry name" value="Anticodon-bd_dom_sf"/>
</dbReference>
<dbReference type="InterPro" id="IPR027031">
    <property type="entry name" value="Gly-tRNA_synthase/POLG2"/>
</dbReference>
<dbReference type="InterPro" id="IPR022961">
    <property type="entry name" value="Gly_tRNA_ligase_bac"/>
</dbReference>
<dbReference type="InterPro" id="IPR033731">
    <property type="entry name" value="GlyRS-like_core"/>
</dbReference>
<dbReference type="InterPro" id="IPR002315">
    <property type="entry name" value="tRNA-synt_gly"/>
</dbReference>
<dbReference type="NCBIfam" id="TIGR00389">
    <property type="entry name" value="glyS_dimeric"/>
    <property type="match status" value="1"/>
</dbReference>
<dbReference type="NCBIfam" id="NF003211">
    <property type="entry name" value="PRK04173.1"/>
    <property type="match status" value="1"/>
</dbReference>
<dbReference type="PANTHER" id="PTHR10745:SF8">
    <property type="entry name" value="DNA POLYMERASE SUBUNIT GAMMA-2, MITOCHONDRIAL"/>
    <property type="match status" value="1"/>
</dbReference>
<dbReference type="PANTHER" id="PTHR10745">
    <property type="entry name" value="GLYCYL-TRNA SYNTHETASE/DNA POLYMERASE SUBUNIT GAMMA-2"/>
    <property type="match status" value="1"/>
</dbReference>
<dbReference type="Pfam" id="PF03129">
    <property type="entry name" value="HGTP_anticodon"/>
    <property type="match status" value="1"/>
</dbReference>
<dbReference type="Pfam" id="PF00587">
    <property type="entry name" value="tRNA-synt_2b"/>
    <property type="match status" value="1"/>
</dbReference>
<dbReference type="PRINTS" id="PR01043">
    <property type="entry name" value="TRNASYNTHGLY"/>
</dbReference>
<dbReference type="SUPFAM" id="SSF52954">
    <property type="entry name" value="Class II aaRS ABD-related"/>
    <property type="match status" value="1"/>
</dbReference>
<dbReference type="SUPFAM" id="SSF55681">
    <property type="entry name" value="Class II aaRS and biotin synthetases"/>
    <property type="match status" value="1"/>
</dbReference>
<dbReference type="PROSITE" id="PS50862">
    <property type="entry name" value="AA_TRNA_LIGASE_II"/>
    <property type="match status" value="1"/>
</dbReference>
<keyword id="KW-0030">Aminoacyl-tRNA synthetase</keyword>
<keyword id="KW-0067">ATP-binding</keyword>
<keyword id="KW-0963">Cytoplasm</keyword>
<keyword id="KW-0436">Ligase</keyword>
<keyword id="KW-0547">Nucleotide-binding</keyword>
<keyword id="KW-0648">Protein biosynthesis</keyword>
<keyword id="KW-1185">Reference proteome</keyword>
<proteinExistence type="inferred from homology"/>
<protein>
    <recommendedName>
        <fullName evidence="1">Glycine--tRNA ligase</fullName>
        <ecNumber evidence="1">6.1.1.14</ecNumber>
    </recommendedName>
    <alternativeName>
        <fullName evidence="1">Glycyl-tRNA synthetase</fullName>
        <shortName evidence="1">GlyRS</shortName>
    </alternativeName>
</protein>
<feature type="chain" id="PRO_1000125525" description="Glycine--tRNA ligase">
    <location>
        <begin position="1"/>
        <end position="462"/>
    </location>
</feature>
<feature type="binding site" evidence="1">
    <location>
        <position position="100"/>
    </location>
    <ligand>
        <name>substrate</name>
    </ligand>
</feature>
<feature type="binding site" evidence="1">
    <location>
        <position position="174"/>
    </location>
    <ligand>
        <name>substrate</name>
    </ligand>
</feature>
<feature type="binding site" evidence="1">
    <location>
        <begin position="206"/>
        <end position="208"/>
    </location>
    <ligand>
        <name>ATP</name>
        <dbReference type="ChEBI" id="CHEBI:30616"/>
    </ligand>
</feature>
<feature type="binding site" evidence="1">
    <location>
        <begin position="216"/>
        <end position="221"/>
    </location>
    <ligand>
        <name>ATP</name>
        <dbReference type="ChEBI" id="CHEBI:30616"/>
    </ligand>
</feature>
<feature type="binding site" evidence="1">
    <location>
        <begin position="221"/>
        <end position="225"/>
    </location>
    <ligand>
        <name>substrate</name>
    </ligand>
</feature>
<feature type="binding site" evidence="1">
    <location>
        <begin position="290"/>
        <end position="291"/>
    </location>
    <ligand>
        <name>ATP</name>
        <dbReference type="ChEBI" id="CHEBI:30616"/>
    </ligand>
</feature>
<feature type="binding site" evidence="1">
    <location>
        <begin position="330"/>
        <end position="334"/>
    </location>
    <ligand>
        <name>substrate</name>
    </ligand>
</feature>
<feature type="binding site" evidence="1">
    <location>
        <begin position="334"/>
        <end position="337"/>
    </location>
    <ligand>
        <name>ATP</name>
        <dbReference type="ChEBI" id="CHEBI:30616"/>
    </ligand>
</feature>